<proteinExistence type="evidence at transcript level"/>
<comment type="function">
    <text evidence="2">May play role in regulating embryonic neurogenesis.</text>
</comment>
<comment type="subcellular location">
    <subcellularLocation>
        <location evidence="1">Cytoplasm</location>
        <location evidence="1">Cytosol</location>
    </subcellularLocation>
    <subcellularLocation>
        <location evidence="1">Cytoplasm</location>
        <location evidence="1">Cytoskeleton</location>
        <location evidence="1">Microtubule organizing center</location>
        <location evidence="1">Centrosome</location>
    </subcellularLocation>
    <subcellularLocation>
        <location evidence="1">Cytoplasm</location>
        <location evidence="1">Cytoskeleton</location>
        <location evidence="1">Spindle pole</location>
    </subcellularLocation>
</comment>
<comment type="developmental stage">
    <text evidence="6">In stage 30 tadpoles, expressed in the dorsal and ventral forebrain and, at lower levels, the dorsal midbrain and hindbrain. At this stage, expression is not detected in the spinal cord, but is present in the overlying dorsal fin. Also expressed in the eye, trigeminal ganglion, branchial arches and cement gland.</text>
</comment>
<organism>
    <name type="scientific">Xenopus laevis</name>
    <name type="common">African clawed frog</name>
    <dbReference type="NCBI Taxonomy" id="8355"/>
    <lineage>
        <taxon>Eukaryota</taxon>
        <taxon>Metazoa</taxon>
        <taxon>Chordata</taxon>
        <taxon>Craniata</taxon>
        <taxon>Vertebrata</taxon>
        <taxon>Euteleostomi</taxon>
        <taxon>Amphibia</taxon>
        <taxon>Batrachia</taxon>
        <taxon>Anura</taxon>
        <taxon>Pipoidea</taxon>
        <taxon>Pipidae</taxon>
        <taxon>Xenopodinae</taxon>
        <taxon>Xenopus</taxon>
        <taxon>Xenopus</taxon>
    </lineage>
</organism>
<gene>
    <name type="primary">rassf10</name>
</gene>
<feature type="chain" id="PRO_0000419604" description="Ras association domain-containing protein 10">
    <location>
        <begin position="1"/>
        <end position="453"/>
    </location>
</feature>
<feature type="domain" description="Ras-associating" evidence="4">
    <location>
        <begin position="1"/>
        <end position="107"/>
    </location>
</feature>
<feature type="region of interest" description="Disordered" evidence="5">
    <location>
        <begin position="299"/>
        <end position="322"/>
    </location>
</feature>
<feature type="region of interest" description="Disordered" evidence="5">
    <location>
        <begin position="402"/>
        <end position="453"/>
    </location>
</feature>
<feature type="coiled-coil region" evidence="3">
    <location>
        <begin position="262"/>
        <end position="295"/>
    </location>
</feature>
<feature type="compositionally biased region" description="Basic and acidic residues" evidence="5">
    <location>
        <begin position="299"/>
        <end position="310"/>
    </location>
</feature>
<feature type="compositionally biased region" description="Polar residues" evidence="5">
    <location>
        <begin position="402"/>
        <end position="411"/>
    </location>
</feature>
<feature type="compositionally biased region" description="Polar residues" evidence="5">
    <location>
        <begin position="433"/>
        <end position="444"/>
    </location>
</feature>
<dbReference type="EMBL" id="EU414773">
    <property type="protein sequence ID" value="ABZ80616.1"/>
    <property type="molecule type" value="mRNA"/>
</dbReference>
<dbReference type="EMBL" id="HQ221332">
    <property type="protein sequence ID" value="ADT90827.1"/>
    <property type="molecule type" value="Genomic_DNA"/>
</dbReference>
<dbReference type="EMBL" id="HQ221333">
    <property type="protein sequence ID" value="ADT90828.1"/>
    <property type="molecule type" value="Genomic_DNA"/>
</dbReference>
<dbReference type="EMBL" id="HQ221334">
    <property type="protein sequence ID" value="ADT90829.1"/>
    <property type="molecule type" value="Genomic_DNA"/>
</dbReference>
<dbReference type="EMBL" id="HQ221335">
    <property type="protein sequence ID" value="ADT90830.1"/>
    <property type="molecule type" value="Genomic_DNA"/>
</dbReference>
<dbReference type="EMBL" id="HQ221336">
    <property type="protein sequence ID" value="ADT90831.1"/>
    <property type="molecule type" value="Genomic_DNA"/>
</dbReference>
<dbReference type="EMBL" id="HQ221337">
    <property type="protein sequence ID" value="ADT90832.1"/>
    <property type="molecule type" value="Genomic_DNA"/>
</dbReference>
<dbReference type="EMBL" id="HQ221338">
    <property type="protein sequence ID" value="ADT90833.1"/>
    <property type="molecule type" value="Genomic_DNA"/>
</dbReference>
<dbReference type="EMBL" id="HQ221339">
    <property type="protein sequence ID" value="ADT90834.1"/>
    <property type="molecule type" value="Genomic_DNA"/>
</dbReference>
<dbReference type="EMBL" id="HQ221340">
    <property type="protein sequence ID" value="ADT90835.1"/>
    <property type="molecule type" value="Genomic_DNA"/>
</dbReference>
<dbReference type="EMBL" id="HQ221341">
    <property type="protein sequence ID" value="ADT90836.1"/>
    <property type="molecule type" value="Genomic_DNA"/>
</dbReference>
<dbReference type="EMBL" id="HQ221342">
    <property type="protein sequence ID" value="ADT90837.1"/>
    <property type="molecule type" value="Genomic_DNA"/>
</dbReference>
<dbReference type="EMBL" id="HQ221343">
    <property type="protein sequence ID" value="ADT90838.1"/>
    <property type="molecule type" value="Genomic_DNA"/>
</dbReference>
<dbReference type="RefSeq" id="NP_001108492.1">
    <property type="nucleotide sequence ID" value="NM_001115020.1"/>
</dbReference>
<dbReference type="SMR" id="B1A193"/>
<dbReference type="GeneID" id="100141316"/>
<dbReference type="KEGG" id="xla:100141316"/>
<dbReference type="AGR" id="Xenbase:XB-GENE-5915054"/>
<dbReference type="CTD" id="100141316"/>
<dbReference type="Xenbase" id="XB-GENE-5915054">
    <property type="gene designation" value="rassf10.L"/>
</dbReference>
<dbReference type="OMA" id="CADVVNV"/>
<dbReference type="OrthoDB" id="10034447at2759"/>
<dbReference type="Proteomes" id="UP000186698">
    <property type="component" value="Chromosome 4L"/>
</dbReference>
<dbReference type="Bgee" id="100141316">
    <property type="expression patterns" value="Expressed in internal ear and 18 other cell types or tissues"/>
</dbReference>
<dbReference type="GO" id="GO:0005813">
    <property type="term" value="C:centrosome"/>
    <property type="evidence" value="ECO:0007669"/>
    <property type="project" value="UniProtKB-SubCell"/>
</dbReference>
<dbReference type="GO" id="GO:0005829">
    <property type="term" value="C:cytosol"/>
    <property type="evidence" value="ECO:0007669"/>
    <property type="project" value="UniProtKB-SubCell"/>
</dbReference>
<dbReference type="GO" id="GO:0000922">
    <property type="term" value="C:spindle pole"/>
    <property type="evidence" value="ECO:0007669"/>
    <property type="project" value="UniProtKB-SubCell"/>
</dbReference>
<dbReference type="GO" id="GO:0007399">
    <property type="term" value="P:nervous system development"/>
    <property type="evidence" value="ECO:0007669"/>
    <property type="project" value="UniProtKB-KW"/>
</dbReference>
<dbReference type="GO" id="GO:2000179">
    <property type="term" value="P:positive regulation of neural precursor cell proliferation"/>
    <property type="evidence" value="ECO:0000250"/>
    <property type="project" value="UniProtKB"/>
</dbReference>
<dbReference type="GO" id="GO:0050769">
    <property type="term" value="P:positive regulation of neurogenesis"/>
    <property type="evidence" value="ECO:0000250"/>
    <property type="project" value="UniProtKB"/>
</dbReference>
<dbReference type="GO" id="GO:0007165">
    <property type="term" value="P:signal transduction"/>
    <property type="evidence" value="ECO:0007669"/>
    <property type="project" value="InterPro"/>
</dbReference>
<dbReference type="CDD" id="cd16132">
    <property type="entry name" value="RA_RASSF10"/>
    <property type="match status" value="1"/>
</dbReference>
<dbReference type="Gene3D" id="3.10.20.90">
    <property type="entry name" value="Phosphatidylinositol 3-kinase Catalytic Subunit, Chain A, domain 1"/>
    <property type="match status" value="1"/>
</dbReference>
<dbReference type="InterPro" id="IPR033593">
    <property type="entry name" value="N-RASSF"/>
</dbReference>
<dbReference type="InterPro" id="IPR000159">
    <property type="entry name" value="RA_dom"/>
</dbReference>
<dbReference type="InterPro" id="IPR033634">
    <property type="entry name" value="RASSF10_RA"/>
</dbReference>
<dbReference type="InterPro" id="IPR048945">
    <property type="entry name" value="RASSF8/10_RA"/>
</dbReference>
<dbReference type="InterPro" id="IPR029071">
    <property type="entry name" value="Ubiquitin-like_domsf"/>
</dbReference>
<dbReference type="PANTHER" id="PTHR15286:SF13">
    <property type="entry name" value="RAS ASSOCIATION DOMAIN-CONTAINING PROTEIN 10"/>
    <property type="match status" value="1"/>
</dbReference>
<dbReference type="PANTHER" id="PTHR15286">
    <property type="entry name" value="RAS-ASSOCIATING DOMAIN CONTAINING PROTEIN"/>
    <property type="match status" value="1"/>
</dbReference>
<dbReference type="Pfam" id="PF21712">
    <property type="entry name" value="RASSF8-10_RA"/>
    <property type="match status" value="1"/>
</dbReference>
<dbReference type="SMART" id="SM00314">
    <property type="entry name" value="RA"/>
    <property type="match status" value="1"/>
</dbReference>
<dbReference type="SUPFAM" id="SSF54236">
    <property type="entry name" value="Ubiquitin-like"/>
    <property type="match status" value="1"/>
</dbReference>
<dbReference type="PROSITE" id="PS50200">
    <property type="entry name" value="RA"/>
    <property type="match status" value="1"/>
</dbReference>
<name>RASFA_XENLA</name>
<reference key="1">
    <citation type="journal article" date="2008" name="Mol. Biol. Cell">
        <title>RASSF7 is a member of a new family of RAS association domain-containing proteins and is required for completing mitosis.</title>
        <authorList>
            <person name="Sherwood V."/>
            <person name="Manbodh R."/>
            <person name="Sheppard C."/>
            <person name="Chalmers A.D."/>
        </authorList>
    </citation>
    <scope>NUCLEOTIDE SEQUENCE [MRNA]</scope>
</reference>
<reference key="2">
    <citation type="journal article" date="2011" name="Evolution">
        <title>Evolution of the closely related, sex-related genes DM-W and DMRT1 in African clawed frogs (Xenopus).</title>
        <authorList>
            <person name="Bewick A.J."/>
            <person name="Anderson D.W."/>
            <person name="Evans B.J."/>
        </authorList>
    </citation>
    <scope>NUCLEOTIDE SEQUENCE [GENOMIC DNA] OF 181-342</scope>
</reference>
<reference key="3">
    <citation type="journal article" date="2011" name="Oncogene">
        <title>Epigenetic inactivation of the RASSF10 candidate tumor suppressor gene is a frequent and an early event in gliomagenesis.</title>
        <authorList>
            <person name="Hill V.K."/>
            <person name="Underhill-Day N."/>
            <person name="Krex D."/>
            <person name="Robel K."/>
            <person name="Sangan C.B."/>
            <person name="Summersgill H.R."/>
            <person name="Morris M."/>
            <person name="Gentle D."/>
            <person name="Chalmers A.D."/>
            <person name="Maher E.R."/>
            <person name="Latif F."/>
        </authorList>
    </citation>
    <scope>DEVELOPMENTAL STAGE</scope>
</reference>
<protein>
    <recommendedName>
        <fullName>Ras association domain-containing protein 10</fullName>
    </recommendedName>
</protein>
<sequence>MENEEWKVSVWICQEEKLVSGLTRRTTCADVVRVLLADHNEKQAEEGSMLMGEEGSMLLGPPQCYCIVEKWRGFERILPNKTKILRLWTAWGEEQDNVKFVLVRSEASLPNIGPRSAEAKVVLSKESPCHQRTLSKTSTGPTQDKQRRVVRKAFRKLAKINRKRHETLPKESSSVEKMETLVHLVLSQDHTIRQQVQRIMELDREIERFEARTHFDRMKMHGVNYVQETYLVGTVSEKGSASDSNPPSDQSSQEELFADYAQKCDEVLLLQEQISRQEEAMEQMTVQIQEELNKRWMERRQEELSSKEQESSLSDSGADQGGDESQLLLEQEQVKTELSASLYIGLRLNTDLEAIKADLDYTQKMWDDKEQELQSLLHSLNDLETSGCQDLAEISCEDTSLGVTTTGSPTDSWVEKDLGRPTNCEANDEDSDTGLSSMHSQDSDSGPVCESLV</sequence>
<keyword id="KW-0175">Coiled coil</keyword>
<keyword id="KW-0963">Cytoplasm</keyword>
<keyword id="KW-0206">Cytoskeleton</keyword>
<keyword id="KW-0524">Neurogenesis</keyword>
<keyword id="KW-1185">Reference proteome</keyword>
<evidence type="ECO:0000250" key="1"/>
<evidence type="ECO:0000250" key="2">
    <source>
        <dbReference type="UniProtKB" id="Q8BL43"/>
    </source>
</evidence>
<evidence type="ECO:0000255" key="3"/>
<evidence type="ECO:0000255" key="4">
    <source>
        <dbReference type="PROSITE-ProRule" id="PRU00166"/>
    </source>
</evidence>
<evidence type="ECO:0000256" key="5">
    <source>
        <dbReference type="SAM" id="MobiDB-lite"/>
    </source>
</evidence>
<evidence type="ECO:0000269" key="6">
    <source>
    </source>
</evidence>
<accession>B1A193</accession>
<accession>E7DDA4</accession>
<accession>E7DDA5</accession>
<accession>E7DDA7</accession>